<comment type="function">
    <text evidence="1">Catalyzes the condensation reaction of fatty acid synthesis by the addition to an acyl acceptor of two carbons from malonyl-ACP. Catalyzes the first condensation reaction which initiates fatty acid synthesis and may therefore play a role in governing the total rate of fatty acid production. Possesses both acetoacetyl-ACP synthase and acetyl transacylase activities. Its substrate specificity determines the biosynthesis of branched-chain and/or straight-chain of fatty acids.</text>
</comment>
<comment type="catalytic activity">
    <reaction evidence="1">
        <text>malonyl-[ACP] + acetyl-CoA + H(+) = 3-oxobutanoyl-[ACP] + CO2 + CoA</text>
        <dbReference type="Rhea" id="RHEA:12080"/>
        <dbReference type="Rhea" id="RHEA-COMP:9623"/>
        <dbReference type="Rhea" id="RHEA-COMP:9625"/>
        <dbReference type="ChEBI" id="CHEBI:15378"/>
        <dbReference type="ChEBI" id="CHEBI:16526"/>
        <dbReference type="ChEBI" id="CHEBI:57287"/>
        <dbReference type="ChEBI" id="CHEBI:57288"/>
        <dbReference type="ChEBI" id="CHEBI:78449"/>
        <dbReference type="ChEBI" id="CHEBI:78450"/>
        <dbReference type="EC" id="2.3.1.180"/>
    </reaction>
</comment>
<comment type="pathway">
    <text evidence="1">Lipid metabolism; fatty acid biosynthesis.</text>
</comment>
<comment type="subunit">
    <text evidence="1">Homodimer.</text>
</comment>
<comment type="subcellular location">
    <subcellularLocation>
        <location evidence="1">Cytoplasm</location>
    </subcellularLocation>
</comment>
<comment type="domain">
    <text evidence="1">The last Arg residue of the ACP-binding site is essential for the weak association between ACP/AcpP and FabH.</text>
</comment>
<comment type="similarity">
    <text evidence="1">Belongs to the thiolase-like superfamily. FabH family.</text>
</comment>
<keyword id="KW-0002">3D-structure</keyword>
<keyword id="KW-0012">Acyltransferase</keyword>
<keyword id="KW-0963">Cytoplasm</keyword>
<keyword id="KW-0275">Fatty acid biosynthesis</keyword>
<keyword id="KW-0276">Fatty acid metabolism</keyword>
<keyword id="KW-0444">Lipid biosynthesis</keyword>
<keyword id="KW-0443">Lipid metabolism</keyword>
<keyword id="KW-0511">Multifunctional enzyme</keyword>
<keyword id="KW-0808">Transferase</keyword>
<organism>
    <name type="scientific">Streptococcus pneumoniae (strain P1031)</name>
    <dbReference type="NCBI Taxonomy" id="488223"/>
    <lineage>
        <taxon>Bacteria</taxon>
        <taxon>Bacillati</taxon>
        <taxon>Bacillota</taxon>
        <taxon>Bacilli</taxon>
        <taxon>Lactobacillales</taxon>
        <taxon>Streptococcaceae</taxon>
        <taxon>Streptococcus</taxon>
    </lineage>
</organism>
<evidence type="ECO:0000255" key="1">
    <source>
        <dbReference type="HAMAP-Rule" id="MF_01815"/>
    </source>
</evidence>
<evidence type="ECO:0007829" key="2">
    <source>
        <dbReference type="PDB" id="5BQS"/>
    </source>
</evidence>
<accession>C1CIR8</accession>
<reference key="1">
    <citation type="journal article" date="2010" name="Genome Biol.">
        <title>Structure and dynamics of the pan-genome of Streptococcus pneumoniae and closely related species.</title>
        <authorList>
            <person name="Donati C."/>
            <person name="Hiller N.L."/>
            <person name="Tettelin H."/>
            <person name="Muzzi A."/>
            <person name="Croucher N.J."/>
            <person name="Angiuoli S.V."/>
            <person name="Oggioni M."/>
            <person name="Dunning Hotopp J.C."/>
            <person name="Hu F.Z."/>
            <person name="Riley D.R."/>
            <person name="Covacci A."/>
            <person name="Mitchell T.J."/>
            <person name="Bentley S.D."/>
            <person name="Kilian M."/>
            <person name="Ehrlich G.D."/>
            <person name="Rappuoli R."/>
            <person name="Moxon E.R."/>
            <person name="Masignani V."/>
        </authorList>
    </citation>
    <scope>NUCLEOTIDE SEQUENCE [LARGE SCALE GENOMIC DNA]</scope>
    <source>
        <strain>P1031</strain>
    </source>
</reference>
<proteinExistence type="evidence at protein level"/>
<sequence length="324" mass="34903">MAFAKISQVAHYVPEQVVTNHDLAQIMDTNDEWISSRTGIRQRHISRTESTSDLATEVAKKLMAKAGITGKELDFIILATITPDSMMPSTAARVQANIGANKAFAFDLTAACSGFVFALSTAEKFIASGRFQKGLVIGSETLSKAVDWSDRSTAVLFGDGAGGVLLEASEQEHFLAESLNSDGSRSECLTYGHSGLHSPFSDQESADSFLKMDGRTVFDFAIRDVAKSIKQTIDESPIEVTDLDYLLLHQANDRILDKMARKIGVDRAKLPANMMEYGNTSAASIPILLSECVEQGLIPLDGSQTVLLSGFGGGLTWGTLILTI</sequence>
<gene>
    <name evidence="1" type="primary">fabH</name>
    <name type="ordered locus">SPP_0448</name>
</gene>
<protein>
    <recommendedName>
        <fullName evidence="1">Beta-ketoacyl-[acyl-carrier-protein] synthase III</fullName>
        <shortName evidence="1">Beta-ketoacyl-ACP synthase III</shortName>
        <shortName evidence="1">KAS III</shortName>
        <ecNumber evidence="1">2.3.1.180</ecNumber>
    </recommendedName>
    <alternativeName>
        <fullName evidence="1">3-oxoacyl-[acyl-carrier-protein] synthase 3</fullName>
    </alternativeName>
    <alternativeName>
        <fullName evidence="1">3-oxoacyl-[acyl-carrier-protein] synthase III</fullName>
    </alternativeName>
</protein>
<feature type="chain" id="PRO_1000187905" description="Beta-ketoacyl-[acyl-carrier-protein] synthase III">
    <location>
        <begin position="1"/>
        <end position="324"/>
    </location>
</feature>
<feature type="region of interest" description="ACP-binding" evidence="1">
    <location>
        <begin position="250"/>
        <end position="254"/>
    </location>
</feature>
<feature type="active site" evidence="1">
    <location>
        <position position="112"/>
    </location>
</feature>
<feature type="active site" evidence="1">
    <location>
        <position position="249"/>
    </location>
</feature>
<feature type="active site" evidence="1">
    <location>
        <position position="279"/>
    </location>
</feature>
<feature type="strand" evidence="2">
    <location>
        <begin position="3"/>
        <end position="12"/>
    </location>
</feature>
<feature type="strand" evidence="2">
    <location>
        <begin position="17"/>
        <end position="19"/>
    </location>
</feature>
<feature type="helix" evidence="2">
    <location>
        <begin position="20"/>
        <end position="23"/>
    </location>
</feature>
<feature type="turn" evidence="2">
    <location>
        <begin position="24"/>
        <end position="26"/>
    </location>
</feature>
<feature type="helix" evidence="2">
    <location>
        <begin position="31"/>
        <end position="38"/>
    </location>
</feature>
<feature type="strand" evidence="2">
    <location>
        <begin position="41"/>
        <end position="44"/>
    </location>
</feature>
<feature type="helix" evidence="2">
    <location>
        <begin position="51"/>
        <end position="66"/>
    </location>
</feature>
<feature type="helix" evidence="2">
    <location>
        <begin position="70"/>
        <end position="72"/>
    </location>
</feature>
<feature type="strand" evidence="2">
    <location>
        <begin position="74"/>
        <end position="79"/>
    </location>
</feature>
<feature type="strand" evidence="2">
    <location>
        <begin position="86"/>
        <end position="88"/>
    </location>
</feature>
<feature type="helix" evidence="2">
    <location>
        <begin position="90"/>
        <end position="98"/>
    </location>
</feature>
<feature type="strand" evidence="2">
    <location>
        <begin position="104"/>
        <end position="109"/>
    </location>
</feature>
<feature type="helix" evidence="2">
    <location>
        <begin position="111"/>
        <end position="113"/>
    </location>
</feature>
<feature type="helix" evidence="2">
    <location>
        <begin position="114"/>
        <end position="127"/>
    </location>
</feature>
<feature type="strand" evidence="2">
    <location>
        <begin position="133"/>
        <end position="141"/>
    </location>
</feature>
<feature type="helix" evidence="2">
    <location>
        <begin position="142"/>
        <end position="144"/>
    </location>
</feature>
<feature type="helix" evidence="2">
    <location>
        <begin position="151"/>
        <end position="154"/>
    </location>
</feature>
<feature type="strand" evidence="2">
    <location>
        <begin position="159"/>
        <end position="171"/>
    </location>
</feature>
<feature type="strand" evidence="2">
    <location>
        <begin position="174"/>
        <end position="181"/>
    </location>
</feature>
<feature type="helix" evidence="2">
    <location>
        <begin position="183"/>
        <end position="188"/>
    </location>
</feature>
<feature type="strand" evidence="2">
    <location>
        <begin position="189"/>
        <end position="191"/>
    </location>
</feature>
<feature type="helix" evidence="2">
    <location>
        <begin position="214"/>
        <end position="222"/>
    </location>
</feature>
<feature type="helix" evidence="2">
    <location>
        <begin position="224"/>
        <end position="235"/>
    </location>
</feature>
<feature type="strand" evidence="2">
    <location>
        <begin position="236"/>
        <end position="238"/>
    </location>
</feature>
<feature type="helix" evidence="2">
    <location>
        <begin position="240"/>
        <end position="242"/>
    </location>
</feature>
<feature type="strand" evidence="2">
    <location>
        <begin position="244"/>
        <end position="248"/>
    </location>
</feature>
<feature type="helix" evidence="2">
    <location>
        <begin position="253"/>
        <end position="263"/>
    </location>
</feature>
<feature type="helix" evidence="2">
    <location>
        <begin position="267"/>
        <end position="269"/>
    </location>
</feature>
<feature type="helix" evidence="2">
    <location>
        <begin position="274"/>
        <end position="277"/>
    </location>
</feature>
<feature type="helix" evidence="2">
    <location>
        <begin position="281"/>
        <end position="283"/>
    </location>
</feature>
<feature type="helix" evidence="2">
    <location>
        <begin position="284"/>
        <end position="294"/>
    </location>
</feature>
<feature type="strand" evidence="2">
    <location>
        <begin position="300"/>
        <end position="302"/>
    </location>
</feature>
<feature type="strand" evidence="2">
    <location>
        <begin position="304"/>
        <end position="312"/>
    </location>
</feature>
<feature type="turn" evidence="2">
    <location>
        <begin position="313"/>
        <end position="315"/>
    </location>
</feature>
<feature type="strand" evidence="2">
    <location>
        <begin position="316"/>
        <end position="324"/>
    </location>
</feature>
<dbReference type="EC" id="2.3.1.180" evidence="1"/>
<dbReference type="EMBL" id="CP000920">
    <property type="protein sequence ID" value="ACO20732.1"/>
    <property type="molecule type" value="Genomic_DNA"/>
</dbReference>
<dbReference type="RefSeq" id="WP_000852956.1">
    <property type="nucleotide sequence ID" value="NC_012467.1"/>
</dbReference>
<dbReference type="PDB" id="5BQS">
    <property type="method" value="X-ray"/>
    <property type="resolution" value="1.90 A"/>
    <property type="chains" value="A/B=2-324"/>
</dbReference>
<dbReference type="PDBsum" id="5BQS"/>
<dbReference type="SMR" id="C1CIR8"/>
<dbReference type="KEGG" id="spp:SPP_0448"/>
<dbReference type="HOGENOM" id="CLU_039592_4_1_9"/>
<dbReference type="UniPathway" id="UPA00094"/>
<dbReference type="GO" id="GO:0005737">
    <property type="term" value="C:cytoplasm"/>
    <property type="evidence" value="ECO:0007669"/>
    <property type="project" value="UniProtKB-SubCell"/>
</dbReference>
<dbReference type="GO" id="GO:0004315">
    <property type="term" value="F:3-oxoacyl-[acyl-carrier-protein] synthase activity"/>
    <property type="evidence" value="ECO:0007669"/>
    <property type="project" value="InterPro"/>
</dbReference>
<dbReference type="GO" id="GO:0033818">
    <property type="term" value="F:beta-ketoacyl-acyl-carrier-protein synthase III activity"/>
    <property type="evidence" value="ECO:0007669"/>
    <property type="project" value="UniProtKB-UniRule"/>
</dbReference>
<dbReference type="GO" id="GO:0006633">
    <property type="term" value="P:fatty acid biosynthetic process"/>
    <property type="evidence" value="ECO:0007669"/>
    <property type="project" value="UniProtKB-UniRule"/>
</dbReference>
<dbReference type="CDD" id="cd00830">
    <property type="entry name" value="KAS_III"/>
    <property type="match status" value="1"/>
</dbReference>
<dbReference type="Gene3D" id="3.40.47.10">
    <property type="match status" value="1"/>
</dbReference>
<dbReference type="HAMAP" id="MF_01815">
    <property type="entry name" value="FabH"/>
    <property type="match status" value="1"/>
</dbReference>
<dbReference type="InterPro" id="IPR013747">
    <property type="entry name" value="ACP_syn_III_C"/>
</dbReference>
<dbReference type="InterPro" id="IPR013751">
    <property type="entry name" value="ACP_syn_III_N"/>
</dbReference>
<dbReference type="InterPro" id="IPR004655">
    <property type="entry name" value="FabH"/>
</dbReference>
<dbReference type="InterPro" id="IPR016039">
    <property type="entry name" value="Thiolase-like"/>
</dbReference>
<dbReference type="NCBIfam" id="TIGR00747">
    <property type="entry name" value="fabH"/>
    <property type="match status" value="1"/>
</dbReference>
<dbReference type="NCBIfam" id="NF006829">
    <property type="entry name" value="PRK09352.1"/>
    <property type="match status" value="1"/>
</dbReference>
<dbReference type="PANTHER" id="PTHR43091">
    <property type="entry name" value="3-OXOACYL-[ACYL-CARRIER-PROTEIN] SYNTHASE"/>
    <property type="match status" value="1"/>
</dbReference>
<dbReference type="PANTHER" id="PTHR43091:SF1">
    <property type="entry name" value="BETA-KETOACYL-[ACYL-CARRIER-PROTEIN] SYNTHASE III, CHLOROPLASTIC"/>
    <property type="match status" value="1"/>
</dbReference>
<dbReference type="Pfam" id="PF08545">
    <property type="entry name" value="ACP_syn_III"/>
    <property type="match status" value="1"/>
</dbReference>
<dbReference type="Pfam" id="PF08541">
    <property type="entry name" value="ACP_syn_III_C"/>
    <property type="match status" value="1"/>
</dbReference>
<dbReference type="SUPFAM" id="SSF53901">
    <property type="entry name" value="Thiolase-like"/>
    <property type="match status" value="1"/>
</dbReference>
<name>FABH_STRZP</name>